<protein>
    <recommendedName>
        <fullName evidence="1">UvrABC system protein B</fullName>
        <shortName evidence="1">Protein UvrB</shortName>
    </recommendedName>
    <alternativeName>
        <fullName evidence="1">Excinuclease ABC subunit B</fullName>
    </alternativeName>
</protein>
<gene>
    <name evidence="1" type="primary">uvrB</name>
    <name type="ordered locus">YpsIP31758_2839</name>
</gene>
<sequence length="671" mass="76246">MSKSFKLHSVFKPAGDQPEAIRKLEEGLENGLAHQTLLGVTGSGKTFTVANVIADLNRPTMILAPNKTLAAQLYGEMKEFFPDNAVEYFVSYYDYYQPEAYVPSSDTFIEKDASVNEHIEQMRLSATKALLERRDVVVVASVSAIYGLGDPDLYLKMMLHLTRGMIIDQRSILRRLSELQYSRNDQVFQRGTFRVRGEVIDIFPAESDEWALRVELFDEEVERLSIFDPLTGQLQHEVPRFTVYPKTHYVTPRERILQAMEEIKVELAERRQVLLANNKLLEEQRLSQRTQFDLEMMNELGYCSGIENYSRYLSGRGPGEAPPTLFDYLPADGLLIVDESHVTIPQIGGMYKGDRSRKETLVEYGFRLPSALDNRPMRFEEFEALAPQTIYVSATPGKYELEKSGGDIIEQVVRPTGLLDPLIEVRPVATQVDDLLSEIRIRAAINERVLVTTLTKRMAEDLTDYLSEHGAKVRYLHSDIDTVERVEIIRDLRLGEFDVLVGINLLREGLDMPEVSLVAILDADKEGFLRSERSLIQTIGRAARNLNGKAILYGDRITASMEKAIGETERRRAKQQAYNEERGIIPQGLNKKIGDILQLGQPSMRGKGKGRGSHKMADTTQYQSLSPKALDQKIRELEAKMYTYAQNLEFEQAAELRDQVHQLRQQFIAIS</sequence>
<keyword id="KW-0067">ATP-binding</keyword>
<keyword id="KW-0963">Cytoplasm</keyword>
<keyword id="KW-0227">DNA damage</keyword>
<keyword id="KW-0228">DNA excision</keyword>
<keyword id="KW-0234">DNA repair</keyword>
<keyword id="KW-0267">Excision nuclease</keyword>
<keyword id="KW-0347">Helicase</keyword>
<keyword id="KW-0378">Hydrolase</keyword>
<keyword id="KW-0547">Nucleotide-binding</keyword>
<keyword id="KW-0742">SOS response</keyword>
<name>UVRB_YERP3</name>
<feature type="chain" id="PRO_1000077944" description="UvrABC system protein B">
    <location>
        <begin position="1"/>
        <end position="671"/>
    </location>
</feature>
<feature type="domain" description="Helicase ATP-binding" evidence="1">
    <location>
        <begin position="26"/>
        <end position="183"/>
    </location>
</feature>
<feature type="domain" description="Helicase C-terminal" evidence="1">
    <location>
        <begin position="431"/>
        <end position="597"/>
    </location>
</feature>
<feature type="domain" description="UVR" evidence="1">
    <location>
        <begin position="631"/>
        <end position="666"/>
    </location>
</feature>
<feature type="short sequence motif" description="Beta-hairpin">
    <location>
        <begin position="92"/>
        <end position="115"/>
    </location>
</feature>
<feature type="binding site" evidence="1">
    <location>
        <begin position="39"/>
        <end position="46"/>
    </location>
    <ligand>
        <name>ATP</name>
        <dbReference type="ChEBI" id="CHEBI:30616"/>
    </ligand>
</feature>
<comment type="function">
    <text evidence="1">The UvrABC repair system catalyzes the recognition and processing of DNA lesions. A damage recognition complex composed of 2 UvrA and 2 UvrB subunits scans DNA for abnormalities. Upon binding of the UvrA(2)B(2) complex to a putative damaged site, the DNA wraps around one UvrB monomer. DNA wrap is dependent on ATP binding by UvrB and probably causes local melting of the DNA helix, facilitating insertion of UvrB beta-hairpin between the DNA strands. Then UvrB probes one DNA strand for the presence of a lesion. If a lesion is found the UvrA subunits dissociate and the UvrB-DNA preincision complex is formed. This complex is subsequently bound by UvrC and the second UvrB is released. If no lesion is found, the DNA wraps around the other UvrB subunit that will check the other stand for damage.</text>
</comment>
<comment type="subunit">
    <text evidence="1">Forms a heterotetramer with UvrA during the search for lesions. Interacts with UvrC in an incision complex.</text>
</comment>
<comment type="subcellular location">
    <subcellularLocation>
        <location evidence="1">Cytoplasm</location>
    </subcellularLocation>
</comment>
<comment type="domain">
    <text evidence="1">The beta-hairpin motif is involved in DNA binding.</text>
</comment>
<comment type="similarity">
    <text evidence="1">Belongs to the UvrB family.</text>
</comment>
<reference key="1">
    <citation type="journal article" date="2007" name="PLoS Genet.">
        <title>The complete genome sequence of Yersinia pseudotuberculosis IP31758, the causative agent of Far East scarlet-like fever.</title>
        <authorList>
            <person name="Eppinger M."/>
            <person name="Rosovitz M.J."/>
            <person name="Fricke W.F."/>
            <person name="Rasko D.A."/>
            <person name="Kokorina G."/>
            <person name="Fayolle C."/>
            <person name="Lindler L.E."/>
            <person name="Carniel E."/>
            <person name="Ravel J."/>
        </authorList>
    </citation>
    <scope>NUCLEOTIDE SEQUENCE [LARGE SCALE GENOMIC DNA]</scope>
    <source>
        <strain>IP 31758</strain>
    </source>
</reference>
<evidence type="ECO:0000255" key="1">
    <source>
        <dbReference type="HAMAP-Rule" id="MF_00204"/>
    </source>
</evidence>
<proteinExistence type="inferred from homology"/>
<accession>A7FKM4</accession>
<organism>
    <name type="scientific">Yersinia pseudotuberculosis serotype O:1b (strain IP 31758)</name>
    <dbReference type="NCBI Taxonomy" id="349747"/>
    <lineage>
        <taxon>Bacteria</taxon>
        <taxon>Pseudomonadati</taxon>
        <taxon>Pseudomonadota</taxon>
        <taxon>Gammaproteobacteria</taxon>
        <taxon>Enterobacterales</taxon>
        <taxon>Yersiniaceae</taxon>
        <taxon>Yersinia</taxon>
    </lineage>
</organism>
<dbReference type="EMBL" id="CP000720">
    <property type="protein sequence ID" value="ABS49611.1"/>
    <property type="molecule type" value="Genomic_DNA"/>
</dbReference>
<dbReference type="RefSeq" id="WP_011191959.1">
    <property type="nucleotide sequence ID" value="NC_009708.1"/>
</dbReference>
<dbReference type="SMR" id="A7FKM4"/>
<dbReference type="GeneID" id="49786740"/>
<dbReference type="KEGG" id="ypi:YpsIP31758_2839"/>
<dbReference type="HOGENOM" id="CLU_009621_2_1_6"/>
<dbReference type="Proteomes" id="UP000002412">
    <property type="component" value="Chromosome"/>
</dbReference>
<dbReference type="GO" id="GO:0005737">
    <property type="term" value="C:cytoplasm"/>
    <property type="evidence" value="ECO:0007669"/>
    <property type="project" value="UniProtKB-SubCell"/>
</dbReference>
<dbReference type="GO" id="GO:0009380">
    <property type="term" value="C:excinuclease repair complex"/>
    <property type="evidence" value="ECO:0007669"/>
    <property type="project" value="InterPro"/>
</dbReference>
<dbReference type="GO" id="GO:0005524">
    <property type="term" value="F:ATP binding"/>
    <property type="evidence" value="ECO:0007669"/>
    <property type="project" value="UniProtKB-UniRule"/>
</dbReference>
<dbReference type="GO" id="GO:0016887">
    <property type="term" value="F:ATP hydrolysis activity"/>
    <property type="evidence" value="ECO:0007669"/>
    <property type="project" value="InterPro"/>
</dbReference>
<dbReference type="GO" id="GO:0003677">
    <property type="term" value="F:DNA binding"/>
    <property type="evidence" value="ECO:0007669"/>
    <property type="project" value="UniProtKB-UniRule"/>
</dbReference>
<dbReference type="GO" id="GO:0009381">
    <property type="term" value="F:excinuclease ABC activity"/>
    <property type="evidence" value="ECO:0007669"/>
    <property type="project" value="UniProtKB-UniRule"/>
</dbReference>
<dbReference type="GO" id="GO:0004386">
    <property type="term" value="F:helicase activity"/>
    <property type="evidence" value="ECO:0007669"/>
    <property type="project" value="UniProtKB-KW"/>
</dbReference>
<dbReference type="GO" id="GO:0006289">
    <property type="term" value="P:nucleotide-excision repair"/>
    <property type="evidence" value="ECO:0007669"/>
    <property type="project" value="UniProtKB-UniRule"/>
</dbReference>
<dbReference type="GO" id="GO:0009432">
    <property type="term" value="P:SOS response"/>
    <property type="evidence" value="ECO:0007669"/>
    <property type="project" value="UniProtKB-UniRule"/>
</dbReference>
<dbReference type="CDD" id="cd17916">
    <property type="entry name" value="DEXHc_UvrB"/>
    <property type="match status" value="1"/>
</dbReference>
<dbReference type="CDD" id="cd18790">
    <property type="entry name" value="SF2_C_UvrB"/>
    <property type="match status" value="1"/>
</dbReference>
<dbReference type="FunFam" id="3.40.50.300:FF:000257">
    <property type="entry name" value="UvrABC system protein B"/>
    <property type="match status" value="1"/>
</dbReference>
<dbReference type="FunFam" id="3.40.50.300:FF:000401">
    <property type="entry name" value="UvrABC system protein B"/>
    <property type="match status" value="1"/>
</dbReference>
<dbReference type="FunFam" id="3.40.50.300:FF:000477">
    <property type="entry name" value="UvrABC system protein B"/>
    <property type="match status" value="1"/>
</dbReference>
<dbReference type="Gene3D" id="3.40.50.300">
    <property type="entry name" value="P-loop containing nucleotide triphosphate hydrolases"/>
    <property type="match status" value="3"/>
</dbReference>
<dbReference type="Gene3D" id="4.10.860.10">
    <property type="entry name" value="UVR domain"/>
    <property type="match status" value="1"/>
</dbReference>
<dbReference type="HAMAP" id="MF_00204">
    <property type="entry name" value="UvrB"/>
    <property type="match status" value="1"/>
</dbReference>
<dbReference type="InterPro" id="IPR006935">
    <property type="entry name" value="Helicase/UvrB_N"/>
</dbReference>
<dbReference type="InterPro" id="IPR014001">
    <property type="entry name" value="Helicase_ATP-bd"/>
</dbReference>
<dbReference type="InterPro" id="IPR001650">
    <property type="entry name" value="Helicase_C-like"/>
</dbReference>
<dbReference type="InterPro" id="IPR027417">
    <property type="entry name" value="P-loop_NTPase"/>
</dbReference>
<dbReference type="InterPro" id="IPR001943">
    <property type="entry name" value="UVR_dom"/>
</dbReference>
<dbReference type="InterPro" id="IPR036876">
    <property type="entry name" value="UVR_dom_sf"/>
</dbReference>
<dbReference type="InterPro" id="IPR004807">
    <property type="entry name" value="UvrB"/>
</dbReference>
<dbReference type="InterPro" id="IPR041471">
    <property type="entry name" value="UvrB_inter"/>
</dbReference>
<dbReference type="InterPro" id="IPR024759">
    <property type="entry name" value="UvrB_YAD/RRR_dom"/>
</dbReference>
<dbReference type="NCBIfam" id="NF003673">
    <property type="entry name" value="PRK05298.1"/>
    <property type="match status" value="1"/>
</dbReference>
<dbReference type="NCBIfam" id="TIGR00631">
    <property type="entry name" value="uvrb"/>
    <property type="match status" value="1"/>
</dbReference>
<dbReference type="PANTHER" id="PTHR24029">
    <property type="entry name" value="UVRABC SYSTEM PROTEIN B"/>
    <property type="match status" value="1"/>
</dbReference>
<dbReference type="PANTHER" id="PTHR24029:SF0">
    <property type="entry name" value="UVRABC SYSTEM PROTEIN B"/>
    <property type="match status" value="1"/>
</dbReference>
<dbReference type="Pfam" id="PF00271">
    <property type="entry name" value="Helicase_C"/>
    <property type="match status" value="1"/>
</dbReference>
<dbReference type="Pfam" id="PF04851">
    <property type="entry name" value="ResIII"/>
    <property type="match status" value="1"/>
</dbReference>
<dbReference type="Pfam" id="PF02151">
    <property type="entry name" value="UVR"/>
    <property type="match status" value="1"/>
</dbReference>
<dbReference type="Pfam" id="PF12344">
    <property type="entry name" value="UvrB"/>
    <property type="match status" value="1"/>
</dbReference>
<dbReference type="Pfam" id="PF17757">
    <property type="entry name" value="UvrB_inter"/>
    <property type="match status" value="1"/>
</dbReference>
<dbReference type="SMART" id="SM00487">
    <property type="entry name" value="DEXDc"/>
    <property type="match status" value="1"/>
</dbReference>
<dbReference type="SMART" id="SM00490">
    <property type="entry name" value="HELICc"/>
    <property type="match status" value="1"/>
</dbReference>
<dbReference type="SUPFAM" id="SSF46600">
    <property type="entry name" value="C-terminal UvrC-binding domain of UvrB"/>
    <property type="match status" value="1"/>
</dbReference>
<dbReference type="SUPFAM" id="SSF52540">
    <property type="entry name" value="P-loop containing nucleoside triphosphate hydrolases"/>
    <property type="match status" value="2"/>
</dbReference>
<dbReference type="PROSITE" id="PS51192">
    <property type="entry name" value="HELICASE_ATP_BIND_1"/>
    <property type="match status" value="1"/>
</dbReference>
<dbReference type="PROSITE" id="PS51194">
    <property type="entry name" value="HELICASE_CTER"/>
    <property type="match status" value="1"/>
</dbReference>
<dbReference type="PROSITE" id="PS50151">
    <property type="entry name" value="UVR"/>
    <property type="match status" value="1"/>
</dbReference>